<gene>
    <name evidence="1" type="primary">rbcL</name>
</gene>
<accession>P36477</accession>
<dbReference type="EC" id="4.1.1.39" evidence="1"/>
<dbReference type="EMBL" id="D14881">
    <property type="protein sequence ID" value="BAA03600.1"/>
    <property type="molecule type" value="Genomic_DNA"/>
</dbReference>
<dbReference type="SMR" id="P36477"/>
<dbReference type="GO" id="GO:0009507">
    <property type="term" value="C:chloroplast"/>
    <property type="evidence" value="ECO:0007669"/>
    <property type="project" value="UniProtKB-SubCell"/>
</dbReference>
<dbReference type="GO" id="GO:0000287">
    <property type="term" value="F:magnesium ion binding"/>
    <property type="evidence" value="ECO:0007669"/>
    <property type="project" value="InterPro"/>
</dbReference>
<dbReference type="GO" id="GO:0004497">
    <property type="term" value="F:monooxygenase activity"/>
    <property type="evidence" value="ECO:0007669"/>
    <property type="project" value="UniProtKB-KW"/>
</dbReference>
<dbReference type="GO" id="GO:0016984">
    <property type="term" value="F:ribulose-bisphosphate carboxylase activity"/>
    <property type="evidence" value="ECO:0007669"/>
    <property type="project" value="UniProtKB-EC"/>
</dbReference>
<dbReference type="GO" id="GO:0009853">
    <property type="term" value="P:photorespiration"/>
    <property type="evidence" value="ECO:0007669"/>
    <property type="project" value="UniProtKB-KW"/>
</dbReference>
<dbReference type="GO" id="GO:0019253">
    <property type="term" value="P:reductive pentose-phosphate cycle"/>
    <property type="evidence" value="ECO:0007669"/>
    <property type="project" value="UniProtKB-KW"/>
</dbReference>
<dbReference type="CDD" id="cd08212">
    <property type="entry name" value="RuBisCO_large_I"/>
    <property type="match status" value="1"/>
</dbReference>
<dbReference type="Gene3D" id="3.20.20.110">
    <property type="entry name" value="Ribulose bisphosphate carboxylase, large subunit, C-terminal domain"/>
    <property type="match status" value="1"/>
</dbReference>
<dbReference type="Gene3D" id="3.30.70.150">
    <property type="entry name" value="RuBisCO large subunit, N-terminal domain"/>
    <property type="match status" value="1"/>
</dbReference>
<dbReference type="HAMAP" id="MF_01338">
    <property type="entry name" value="RuBisCO_L_type1"/>
    <property type="match status" value="1"/>
</dbReference>
<dbReference type="InterPro" id="IPR033966">
    <property type="entry name" value="RuBisCO"/>
</dbReference>
<dbReference type="InterPro" id="IPR020878">
    <property type="entry name" value="RuBisCo_large_chain_AS"/>
</dbReference>
<dbReference type="InterPro" id="IPR000685">
    <property type="entry name" value="RuBisCO_lsu_C"/>
</dbReference>
<dbReference type="InterPro" id="IPR036376">
    <property type="entry name" value="RuBisCO_lsu_C_sf"/>
</dbReference>
<dbReference type="InterPro" id="IPR017443">
    <property type="entry name" value="RuBisCO_lsu_fd_N"/>
</dbReference>
<dbReference type="InterPro" id="IPR036422">
    <property type="entry name" value="RuBisCO_lsu_N_sf"/>
</dbReference>
<dbReference type="InterPro" id="IPR020888">
    <property type="entry name" value="RuBisCO_lsuI"/>
</dbReference>
<dbReference type="NCBIfam" id="NF003252">
    <property type="entry name" value="PRK04208.1"/>
    <property type="match status" value="1"/>
</dbReference>
<dbReference type="PANTHER" id="PTHR42704">
    <property type="entry name" value="RIBULOSE BISPHOSPHATE CARBOXYLASE"/>
    <property type="match status" value="1"/>
</dbReference>
<dbReference type="PANTHER" id="PTHR42704:SF17">
    <property type="entry name" value="RIBULOSE BISPHOSPHATE CARBOXYLASE LARGE CHAIN"/>
    <property type="match status" value="1"/>
</dbReference>
<dbReference type="Pfam" id="PF00016">
    <property type="entry name" value="RuBisCO_large"/>
    <property type="match status" value="1"/>
</dbReference>
<dbReference type="Pfam" id="PF02788">
    <property type="entry name" value="RuBisCO_large_N"/>
    <property type="match status" value="1"/>
</dbReference>
<dbReference type="SFLD" id="SFLDG01052">
    <property type="entry name" value="RuBisCO"/>
    <property type="match status" value="1"/>
</dbReference>
<dbReference type="SFLD" id="SFLDS00014">
    <property type="entry name" value="RuBisCO"/>
    <property type="match status" value="1"/>
</dbReference>
<dbReference type="SFLD" id="SFLDG00301">
    <property type="entry name" value="RuBisCO-like_proteins"/>
    <property type="match status" value="1"/>
</dbReference>
<dbReference type="SUPFAM" id="SSF51649">
    <property type="entry name" value="RuBisCo, C-terminal domain"/>
    <property type="match status" value="1"/>
</dbReference>
<dbReference type="SUPFAM" id="SSF54966">
    <property type="entry name" value="RuBisCO, large subunit, small (N-terminal) domain"/>
    <property type="match status" value="1"/>
</dbReference>
<dbReference type="PROSITE" id="PS00157">
    <property type="entry name" value="RUBISCO_LARGE"/>
    <property type="match status" value="1"/>
</dbReference>
<proteinExistence type="inferred from homology"/>
<reference key="1">
    <citation type="journal article" date="1993" name="J. Mol. Evol.">
        <title>Phylogenetic relationships of ferns deduced from rbcL gene sequence.</title>
        <authorList>
            <person name="Hasebe M."/>
            <person name="Ito M."/>
            <person name="Kofuji R."/>
            <person name="Ueda K."/>
            <person name="Iwatsuki K."/>
        </authorList>
    </citation>
    <scope>NUCLEOTIDE SEQUENCE [GENOMIC DNA]</scope>
    <source>
        <tissue>Leaf</tissue>
    </source>
</reference>
<evidence type="ECO:0000255" key="1">
    <source>
        <dbReference type="HAMAP-Rule" id="MF_01338"/>
    </source>
</evidence>
<name>RBL_BOTST</name>
<protein>
    <recommendedName>
        <fullName evidence="1">Ribulose bisphosphate carboxylase large chain</fullName>
        <shortName evidence="1">RuBisCO large subunit</shortName>
        <ecNumber evidence="1">4.1.1.39</ecNumber>
    </recommendedName>
</protein>
<keyword id="KW-0113">Calvin cycle</keyword>
<keyword id="KW-0120">Carbon dioxide fixation</keyword>
<keyword id="KW-0150">Chloroplast</keyword>
<keyword id="KW-1015">Disulfide bond</keyword>
<keyword id="KW-0456">Lyase</keyword>
<keyword id="KW-0460">Magnesium</keyword>
<keyword id="KW-0479">Metal-binding</keyword>
<keyword id="KW-0488">Methylation</keyword>
<keyword id="KW-0503">Monooxygenase</keyword>
<keyword id="KW-0560">Oxidoreductase</keyword>
<keyword id="KW-0601">Photorespiration</keyword>
<keyword id="KW-0602">Photosynthesis</keyword>
<keyword id="KW-0934">Plastid</keyword>
<organism>
    <name type="scientific">Botrychium strictum</name>
    <name type="common">Fern</name>
    <name type="synonym">Botrypus strictus</name>
    <dbReference type="NCBI Taxonomy" id="13832"/>
    <lineage>
        <taxon>Eukaryota</taxon>
        <taxon>Viridiplantae</taxon>
        <taxon>Streptophyta</taxon>
        <taxon>Embryophyta</taxon>
        <taxon>Tracheophyta</taxon>
        <taxon>Polypodiopsida</taxon>
        <taxon>Ophioglossidae</taxon>
        <taxon>Ophioglossales</taxon>
        <taxon>Ophioglossaceae</taxon>
        <taxon>Botrychioideae</taxon>
        <taxon>Botrychium</taxon>
    </lineage>
</organism>
<feature type="chain" id="PRO_0000062380" description="Ribulose bisphosphate carboxylase large chain">
    <location>
        <begin position="1" status="less than"/>
        <end position="444" status="greater than"/>
    </location>
</feature>
<feature type="active site" description="Proton acceptor" evidence="1">
    <location>
        <position position="166"/>
    </location>
</feature>
<feature type="active site" description="Proton acceptor" evidence="1">
    <location>
        <position position="285"/>
    </location>
</feature>
<feature type="binding site" description="in homodimeric partner" evidence="1">
    <location>
        <position position="114"/>
    </location>
    <ligand>
        <name>substrate</name>
    </ligand>
</feature>
<feature type="binding site" evidence="1">
    <location>
        <position position="164"/>
    </location>
    <ligand>
        <name>substrate</name>
    </ligand>
</feature>
<feature type="binding site" evidence="1">
    <location>
        <position position="168"/>
    </location>
    <ligand>
        <name>substrate</name>
    </ligand>
</feature>
<feature type="binding site" description="via carbamate group" evidence="1">
    <location>
        <position position="192"/>
    </location>
    <ligand>
        <name>Mg(2+)</name>
        <dbReference type="ChEBI" id="CHEBI:18420"/>
    </ligand>
</feature>
<feature type="binding site" evidence="1">
    <location>
        <position position="194"/>
    </location>
    <ligand>
        <name>Mg(2+)</name>
        <dbReference type="ChEBI" id="CHEBI:18420"/>
    </ligand>
</feature>
<feature type="binding site" evidence="1">
    <location>
        <position position="195"/>
    </location>
    <ligand>
        <name>Mg(2+)</name>
        <dbReference type="ChEBI" id="CHEBI:18420"/>
    </ligand>
</feature>
<feature type="binding site" evidence="1">
    <location>
        <position position="286"/>
    </location>
    <ligand>
        <name>substrate</name>
    </ligand>
</feature>
<feature type="binding site" evidence="1">
    <location>
        <position position="318"/>
    </location>
    <ligand>
        <name>substrate</name>
    </ligand>
</feature>
<feature type="binding site" evidence="1">
    <location>
        <position position="370"/>
    </location>
    <ligand>
        <name>substrate</name>
    </ligand>
</feature>
<feature type="site" description="Transition state stabilizer" evidence="1">
    <location>
        <position position="325"/>
    </location>
</feature>
<feature type="modified residue" description="N6,N6,N6-trimethyllysine" evidence="1">
    <location>
        <position position="5"/>
    </location>
</feature>
<feature type="modified residue" description="N6-carboxylysine" evidence="1">
    <location>
        <position position="192"/>
    </location>
</feature>
<feature type="disulfide bond" description="Interchain; in linked form" evidence="1">
    <location>
        <position position="238"/>
    </location>
</feature>
<feature type="non-terminal residue">
    <location>
        <position position="1"/>
    </location>
</feature>
<feature type="non-terminal residue">
    <location>
        <position position="444"/>
    </location>
</feature>
<geneLocation type="chloroplast"/>
<comment type="function">
    <text evidence="1">RuBisCO catalyzes two reactions: the carboxylation of D-ribulose 1,5-bisphosphate, the primary event in carbon dioxide fixation, as well as the oxidative fragmentation of the pentose substrate in the photorespiration process. Both reactions occur simultaneously and in competition at the same active site.</text>
</comment>
<comment type="catalytic activity">
    <reaction evidence="1">
        <text>2 (2R)-3-phosphoglycerate + 2 H(+) = D-ribulose 1,5-bisphosphate + CO2 + H2O</text>
        <dbReference type="Rhea" id="RHEA:23124"/>
        <dbReference type="ChEBI" id="CHEBI:15377"/>
        <dbReference type="ChEBI" id="CHEBI:15378"/>
        <dbReference type="ChEBI" id="CHEBI:16526"/>
        <dbReference type="ChEBI" id="CHEBI:57870"/>
        <dbReference type="ChEBI" id="CHEBI:58272"/>
        <dbReference type="EC" id="4.1.1.39"/>
    </reaction>
</comment>
<comment type="catalytic activity">
    <reaction evidence="1">
        <text>D-ribulose 1,5-bisphosphate + O2 = 2-phosphoglycolate + (2R)-3-phosphoglycerate + 2 H(+)</text>
        <dbReference type="Rhea" id="RHEA:36631"/>
        <dbReference type="ChEBI" id="CHEBI:15378"/>
        <dbReference type="ChEBI" id="CHEBI:15379"/>
        <dbReference type="ChEBI" id="CHEBI:57870"/>
        <dbReference type="ChEBI" id="CHEBI:58033"/>
        <dbReference type="ChEBI" id="CHEBI:58272"/>
    </reaction>
</comment>
<comment type="cofactor">
    <cofactor evidence="1">
        <name>Mg(2+)</name>
        <dbReference type="ChEBI" id="CHEBI:18420"/>
    </cofactor>
    <text evidence="1">Binds 1 Mg(2+) ion per subunit.</text>
</comment>
<comment type="subunit">
    <text evidence="1">Heterohexadecamer of 8 large chains and 8 small chains; disulfide-linked. The disulfide link is formed within the large subunit homodimers.</text>
</comment>
<comment type="subcellular location">
    <subcellularLocation>
        <location>Plastid</location>
        <location>Chloroplast</location>
    </subcellularLocation>
</comment>
<comment type="PTM">
    <text evidence="1">The disulfide bond which can form in the large chain dimeric partners within the hexadecamer appears to be associated with oxidative stress and protein turnover.</text>
</comment>
<comment type="miscellaneous">
    <text evidence="1">The basic functional RuBisCO is composed of a large chain homodimer in a 'head-to-tail' conformation. In form I RuBisCO this homodimer is arranged in a barrel-like tetramer with the small subunits forming a tetrameric 'cap' on each end of the 'barrel'.</text>
</comment>
<comment type="similarity">
    <text evidence="1">Belongs to the RuBisCO large chain family. Type I subfamily.</text>
</comment>
<sequence length="444" mass="48994">GVGFKAGVKDYRLTHYTPDYETKDTDILAAFRMTPQPGVPAAEAGAAVAAESSTGTWTTVWTDGLTSLDRYKGRCYEIEPVPGEENQFIAYVAYPPDLSEEGSVTNMFTSIVGNVFGFKALRALRLEDSRIPPAYSKTFMGPPHGIQVERDKLNKYGRPLLGCTIKPKLGLSAKNYGRAVYECLRGGLDFTKDDENVNSQPFMRWRDRFLFVAEALFKSQAETGEIKGHYSNATAGTCEEMLKRAVFARELGVPIVMHDYLTGGFTANTSLAFYCWDNGLLLHIHRAMHAVIDRQKNHGIHFRVLAKALRMSSGDHIHSGTVVGKLEGERDITLGFVDLLRDDYIEKDRSRGIYFTQDWVSMPGVLPVASGGIHVWHMPALTEIFGDDSVLQFGGGTLGHPWGNAPGAVANRVAPEACVQARNEGRDLAREGNETIREAAKWSP</sequence>